<keyword id="KW-0028">Amino-acid biosynthesis</keyword>
<keyword id="KW-0368">Histidine biosynthesis</keyword>
<keyword id="KW-0479">Metal-binding</keyword>
<keyword id="KW-0520">NAD</keyword>
<keyword id="KW-0560">Oxidoreductase</keyword>
<keyword id="KW-1185">Reference proteome</keyword>
<keyword id="KW-0862">Zinc</keyword>
<gene>
    <name evidence="1" type="primary">hisD</name>
    <name type="ordered locus">Gmet_0384</name>
</gene>
<evidence type="ECO:0000255" key="1">
    <source>
        <dbReference type="HAMAP-Rule" id="MF_01024"/>
    </source>
</evidence>
<comment type="function">
    <text evidence="1">Catalyzes the sequential NAD-dependent oxidations of L-histidinol to L-histidinaldehyde and then to L-histidine.</text>
</comment>
<comment type="catalytic activity">
    <reaction evidence="1">
        <text>L-histidinol + 2 NAD(+) + H2O = L-histidine + 2 NADH + 3 H(+)</text>
        <dbReference type="Rhea" id="RHEA:20641"/>
        <dbReference type="ChEBI" id="CHEBI:15377"/>
        <dbReference type="ChEBI" id="CHEBI:15378"/>
        <dbReference type="ChEBI" id="CHEBI:57540"/>
        <dbReference type="ChEBI" id="CHEBI:57595"/>
        <dbReference type="ChEBI" id="CHEBI:57699"/>
        <dbReference type="ChEBI" id="CHEBI:57945"/>
        <dbReference type="EC" id="1.1.1.23"/>
    </reaction>
</comment>
<comment type="cofactor">
    <cofactor evidence="1">
        <name>Zn(2+)</name>
        <dbReference type="ChEBI" id="CHEBI:29105"/>
    </cofactor>
    <text evidence="1">Binds 1 zinc ion per subunit.</text>
</comment>
<comment type="pathway">
    <text evidence="1">Amino-acid biosynthesis; L-histidine biosynthesis; L-histidine from 5-phospho-alpha-D-ribose 1-diphosphate: step 9/9.</text>
</comment>
<comment type="similarity">
    <text evidence="1">Belongs to the histidinol dehydrogenase family.</text>
</comment>
<sequence length="436" mass="46819">MKFLDIRDTNFDMEFAAILARGEETGREVEQVVLDIIADVRARGDEALLEYTRRFDRLEADSVASLQVTEDEVDYAFARVKDEEIAALKLAVERVARFHEKQKQETWLSTGEPDILLGQMVTPLERVGIYVPGGKASYPSSVIMNAVPARVAGVGEVVMVAPTPGGEINPHVLVAARFSGVDRIFRLGGAQAVAALAYGTATVPKVDKITGPGNIYVATAKKLVFGQVGIDMIAGPSEILVINDGSGTPAHIAADLLSQAEHDELASSILITTDRGFGERVAAEVERQLAELSRETIARRSWETYGAVIVAGSLDEAIAFSNRIAPEHLELAVTNPFDVLPKIRNAGAIFLGHFTPEAAGDYLAGPNHTLPTGGTARFFSPLSVDDFVKKSSIVYFSESGLNRLGGGIVRIAELEGLEAHGRSVSVRLKGEGEARK</sequence>
<organism>
    <name type="scientific">Geobacter metallireducens (strain ATCC 53774 / DSM 7210 / GS-15)</name>
    <dbReference type="NCBI Taxonomy" id="269799"/>
    <lineage>
        <taxon>Bacteria</taxon>
        <taxon>Pseudomonadati</taxon>
        <taxon>Thermodesulfobacteriota</taxon>
        <taxon>Desulfuromonadia</taxon>
        <taxon>Geobacterales</taxon>
        <taxon>Geobacteraceae</taxon>
        <taxon>Geobacter</taxon>
    </lineage>
</organism>
<proteinExistence type="inferred from homology"/>
<feature type="chain" id="PRO_0000229857" description="Histidinol dehydrogenase">
    <location>
        <begin position="1"/>
        <end position="436"/>
    </location>
</feature>
<feature type="active site" description="Proton acceptor" evidence="1">
    <location>
        <position position="327"/>
    </location>
</feature>
<feature type="active site" description="Proton acceptor" evidence="1">
    <location>
        <position position="328"/>
    </location>
</feature>
<feature type="binding site" evidence="1">
    <location>
        <position position="130"/>
    </location>
    <ligand>
        <name>NAD(+)</name>
        <dbReference type="ChEBI" id="CHEBI:57540"/>
    </ligand>
</feature>
<feature type="binding site" evidence="1">
    <location>
        <position position="191"/>
    </location>
    <ligand>
        <name>NAD(+)</name>
        <dbReference type="ChEBI" id="CHEBI:57540"/>
    </ligand>
</feature>
<feature type="binding site" evidence="1">
    <location>
        <position position="214"/>
    </location>
    <ligand>
        <name>NAD(+)</name>
        <dbReference type="ChEBI" id="CHEBI:57540"/>
    </ligand>
</feature>
<feature type="binding site" evidence="1">
    <location>
        <position position="237"/>
    </location>
    <ligand>
        <name>substrate</name>
    </ligand>
</feature>
<feature type="binding site" evidence="1">
    <location>
        <position position="259"/>
    </location>
    <ligand>
        <name>substrate</name>
    </ligand>
</feature>
<feature type="binding site" evidence="1">
    <location>
        <position position="259"/>
    </location>
    <ligand>
        <name>Zn(2+)</name>
        <dbReference type="ChEBI" id="CHEBI:29105"/>
    </ligand>
</feature>
<feature type="binding site" evidence="1">
    <location>
        <position position="262"/>
    </location>
    <ligand>
        <name>substrate</name>
    </ligand>
</feature>
<feature type="binding site" evidence="1">
    <location>
        <position position="262"/>
    </location>
    <ligand>
        <name>Zn(2+)</name>
        <dbReference type="ChEBI" id="CHEBI:29105"/>
    </ligand>
</feature>
<feature type="binding site" evidence="1">
    <location>
        <position position="328"/>
    </location>
    <ligand>
        <name>substrate</name>
    </ligand>
</feature>
<feature type="binding site" evidence="1">
    <location>
        <position position="361"/>
    </location>
    <ligand>
        <name>substrate</name>
    </ligand>
</feature>
<feature type="binding site" evidence="1">
    <location>
        <position position="361"/>
    </location>
    <ligand>
        <name>Zn(2+)</name>
        <dbReference type="ChEBI" id="CHEBI:29105"/>
    </ligand>
</feature>
<feature type="binding site" evidence="1">
    <location>
        <position position="415"/>
    </location>
    <ligand>
        <name>substrate</name>
    </ligand>
</feature>
<feature type="binding site" evidence="1">
    <location>
        <position position="420"/>
    </location>
    <ligand>
        <name>substrate</name>
    </ligand>
</feature>
<feature type="binding site" evidence="1">
    <location>
        <position position="420"/>
    </location>
    <ligand>
        <name>Zn(2+)</name>
        <dbReference type="ChEBI" id="CHEBI:29105"/>
    </ligand>
</feature>
<dbReference type="EC" id="1.1.1.23" evidence="1"/>
<dbReference type="EMBL" id="CP000148">
    <property type="protein sequence ID" value="ABB30627.1"/>
    <property type="molecule type" value="Genomic_DNA"/>
</dbReference>
<dbReference type="RefSeq" id="WP_004512356.1">
    <property type="nucleotide sequence ID" value="NC_007517.1"/>
</dbReference>
<dbReference type="SMR" id="Q39YP7"/>
<dbReference type="STRING" id="269799.Gmet_0384"/>
<dbReference type="KEGG" id="gme:Gmet_0384"/>
<dbReference type="eggNOG" id="COG0141">
    <property type="taxonomic scope" value="Bacteria"/>
</dbReference>
<dbReference type="HOGENOM" id="CLU_006732_3_3_7"/>
<dbReference type="UniPathway" id="UPA00031">
    <property type="reaction ID" value="UER00014"/>
</dbReference>
<dbReference type="Proteomes" id="UP000007073">
    <property type="component" value="Chromosome"/>
</dbReference>
<dbReference type="GO" id="GO:0005829">
    <property type="term" value="C:cytosol"/>
    <property type="evidence" value="ECO:0007669"/>
    <property type="project" value="TreeGrafter"/>
</dbReference>
<dbReference type="GO" id="GO:0004399">
    <property type="term" value="F:histidinol dehydrogenase activity"/>
    <property type="evidence" value="ECO:0007669"/>
    <property type="project" value="UniProtKB-UniRule"/>
</dbReference>
<dbReference type="GO" id="GO:0051287">
    <property type="term" value="F:NAD binding"/>
    <property type="evidence" value="ECO:0007669"/>
    <property type="project" value="InterPro"/>
</dbReference>
<dbReference type="GO" id="GO:0008270">
    <property type="term" value="F:zinc ion binding"/>
    <property type="evidence" value="ECO:0007669"/>
    <property type="project" value="UniProtKB-UniRule"/>
</dbReference>
<dbReference type="GO" id="GO:0000105">
    <property type="term" value="P:L-histidine biosynthetic process"/>
    <property type="evidence" value="ECO:0007669"/>
    <property type="project" value="UniProtKB-UniRule"/>
</dbReference>
<dbReference type="CDD" id="cd06572">
    <property type="entry name" value="Histidinol_dh"/>
    <property type="match status" value="1"/>
</dbReference>
<dbReference type="FunFam" id="3.40.50.1980:FF:000001">
    <property type="entry name" value="Histidinol dehydrogenase"/>
    <property type="match status" value="1"/>
</dbReference>
<dbReference type="FunFam" id="3.40.50.1980:FF:000026">
    <property type="entry name" value="Histidinol dehydrogenase"/>
    <property type="match status" value="1"/>
</dbReference>
<dbReference type="Gene3D" id="1.20.5.1300">
    <property type="match status" value="1"/>
</dbReference>
<dbReference type="Gene3D" id="3.40.50.1980">
    <property type="entry name" value="Nitrogenase molybdenum iron protein domain"/>
    <property type="match status" value="2"/>
</dbReference>
<dbReference type="HAMAP" id="MF_01024">
    <property type="entry name" value="HisD"/>
    <property type="match status" value="1"/>
</dbReference>
<dbReference type="InterPro" id="IPR016161">
    <property type="entry name" value="Ald_DH/histidinol_DH"/>
</dbReference>
<dbReference type="InterPro" id="IPR001692">
    <property type="entry name" value="Histidinol_DH_CS"/>
</dbReference>
<dbReference type="InterPro" id="IPR022695">
    <property type="entry name" value="Histidinol_DH_monofunct"/>
</dbReference>
<dbReference type="InterPro" id="IPR012131">
    <property type="entry name" value="Hstdl_DH"/>
</dbReference>
<dbReference type="NCBIfam" id="TIGR00069">
    <property type="entry name" value="hisD"/>
    <property type="match status" value="1"/>
</dbReference>
<dbReference type="PANTHER" id="PTHR21256:SF2">
    <property type="entry name" value="HISTIDINE BIOSYNTHESIS TRIFUNCTIONAL PROTEIN"/>
    <property type="match status" value="1"/>
</dbReference>
<dbReference type="PANTHER" id="PTHR21256">
    <property type="entry name" value="HISTIDINOL DEHYDROGENASE HDH"/>
    <property type="match status" value="1"/>
</dbReference>
<dbReference type="Pfam" id="PF00815">
    <property type="entry name" value="Histidinol_dh"/>
    <property type="match status" value="1"/>
</dbReference>
<dbReference type="PIRSF" id="PIRSF000099">
    <property type="entry name" value="Histidinol_dh"/>
    <property type="match status" value="1"/>
</dbReference>
<dbReference type="PRINTS" id="PR00083">
    <property type="entry name" value="HOLDHDRGNASE"/>
</dbReference>
<dbReference type="SUPFAM" id="SSF53720">
    <property type="entry name" value="ALDH-like"/>
    <property type="match status" value="1"/>
</dbReference>
<dbReference type="PROSITE" id="PS00611">
    <property type="entry name" value="HISOL_DEHYDROGENASE"/>
    <property type="match status" value="1"/>
</dbReference>
<name>HISX_GEOMG</name>
<accession>Q39YP7</accession>
<protein>
    <recommendedName>
        <fullName evidence="1">Histidinol dehydrogenase</fullName>
        <shortName evidence="1">HDH</shortName>
        <ecNumber evidence="1">1.1.1.23</ecNumber>
    </recommendedName>
</protein>
<reference key="1">
    <citation type="journal article" date="2009" name="BMC Microbiol.">
        <title>The genome sequence of Geobacter metallireducens: features of metabolism, physiology and regulation common and dissimilar to Geobacter sulfurreducens.</title>
        <authorList>
            <person name="Aklujkar M."/>
            <person name="Krushkal J."/>
            <person name="DiBartolo G."/>
            <person name="Lapidus A."/>
            <person name="Land M.L."/>
            <person name="Lovley D.R."/>
        </authorList>
    </citation>
    <scope>NUCLEOTIDE SEQUENCE [LARGE SCALE GENOMIC DNA]</scope>
    <source>
        <strain>ATCC 53774 / DSM 7210 / GS-15</strain>
    </source>
</reference>